<reference key="1">
    <citation type="journal article" date="2004" name="Proc. Natl. Acad. Sci. U.S.A.">
        <title>Genome sequence of the enterobacterial phytopathogen Erwinia carotovora subsp. atroseptica and characterization of virulence factors.</title>
        <authorList>
            <person name="Bell K.S."/>
            <person name="Sebaihia M."/>
            <person name="Pritchard L."/>
            <person name="Holden M.T.G."/>
            <person name="Hyman L.J."/>
            <person name="Holeva M.C."/>
            <person name="Thomson N.R."/>
            <person name="Bentley S.D."/>
            <person name="Churcher L.J.C."/>
            <person name="Mungall K."/>
            <person name="Atkin R."/>
            <person name="Bason N."/>
            <person name="Brooks K."/>
            <person name="Chillingworth T."/>
            <person name="Clark K."/>
            <person name="Doggett J."/>
            <person name="Fraser A."/>
            <person name="Hance Z."/>
            <person name="Hauser H."/>
            <person name="Jagels K."/>
            <person name="Moule S."/>
            <person name="Norbertczak H."/>
            <person name="Ormond D."/>
            <person name="Price C."/>
            <person name="Quail M.A."/>
            <person name="Sanders M."/>
            <person name="Walker D."/>
            <person name="Whitehead S."/>
            <person name="Salmond G.P.C."/>
            <person name="Birch P.R.J."/>
            <person name="Parkhill J."/>
            <person name="Toth I.K."/>
        </authorList>
    </citation>
    <scope>NUCLEOTIDE SEQUENCE [LARGE SCALE GENOMIC DNA]</scope>
    <source>
        <strain>SCRI 1043 / ATCC BAA-672</strain>
    </source>
</reference>
<gene>
    <name evidence="1" type="primary">msrB</name>
    <name type="ordered locus">ECA2343</name>
</gene>
<protein>
    <recommendedName>
        <fullName evidence="1">Peptide methionine sulfoxide reductase MsrB</fullName>
        <ecNumber evidence="1">1.8.4.12</ecNumber>
    </recommendedName>
    <alternativeName>
        <fullName evidence="1">Peptide-methionine (R)-S-oxide reductase</fullName>
    </alternativeName>
</protein>
<organism>
    <name type="scientific">Pectobacterium atrosepticum (strain SCRI 1043 / ATCC BAA-672)</name>
    <name type="common">Erwinia carotovora subsp. atroseptica</name>
    <dbReference type="NCBI Taxonomy" id="218491"/>
    <lineage>
        <taxon>Bacteria</taxon>
        <taxon>Pseudomonadati</taxon>
        <taxon>Pseudomonadota</taxon>
        <taxon>Gammaproteobacteria</taxon>
        <taxon>Enterobacterales</taxon>
        <taxon>Pectobacteriaceae</taxon>
        <taxon>Pectobacterium</taxon>
    </lineage>
</organism>
<feature type="chain" id="PRO_0000140275" description="Peptide methionine sulfoxide reductase MsrB">
    <location>
        <begin position="1"/>
        <end position="139"/>
    </location>
</feature>
<feature type="domain" description="MsrB" evidence="2">
    <location>
        <begin position="9"/>
        <end position="131"/>
    </location>
</feature>
<feature type="active site" description="Nucleophile" evidence="2">
    <location>
        <position position="120"/>
    </location>
</feature>
<feature type="binding site" evidence="2">
    <location>
        <position position="48"/>
    </location>
    <ligand>
        <name>Zn(2+)</name>
        <dbReference type="ChEBI" id="CHEBI:29105"/>
    </ligand>
</feature>
<feature type="binding site" evidence="2">
    <location>
        <position position="51"/>
    </location>
    <ligand>
        <name>Zn(2+)</name>
        <dbReference type="ChEBI" id="CHEBI:29105"/>
    </ligand>
</feature>
<feature type="binding site" evidence="2">
    <location>
        <position position="97"/>
    </location>
    <ligand>
        <name>Zn(2+)</name>
        <dbReference type="ChEBI" id="CHEBI:29105"/>
    </ligand>
</feature>
<feature type="binding site" evidence="2">
    <location>
        <position position="100"/>
    </location>
    <ligand>
        <name>Zn(2+)</name>
        <dbReference type="ChEBI" id="CHEBI:29105"/>
    </ligand>
</feature>
<proteinExistence type="inferred from homology"/>
<dbReference type="EC" id="1.8.4.12" evidence="1"/>
<dbReference type="EMBL" id="BX950851">
    <property type="protein sequence ID" value="CAG75246.1"/>
    <property type="molecule type" value="Genomic_DNA"/>
</dbReference>
<dbReference type="RefSeq" id="WP_011093900.1">
    <property type="nucleotide sequence ID" value="NC_004547.2"/>
</dbReference>
<dbReference type="SMR" id="Q6D4P7"/>
<dbReference type="STRING" id="218491.ECA2343"/>
<dbReference type="GeneID" id="57208940"/>
<dbReference type="KEGG" id="eca:ECA2343"/>
<dbReference type="PATRIC" id="fig|218491.5.peg.2369"/>
<dbReference type="eggNOG" id="COG0229">
    <property type="taxonomic scope" value="Bacteria"/>
</dbReference>
<dbReference type="HOGENOM" id="CLU_031040_8_5_6"/>
<dbReference type="OrthoDB" id="9785497at2"/>
<dbReference type="Proteomes" id="UP000007966">
    <property type="component" value="Chromosome"/>
</dbReference>
<dbReference type="GO" id="GO:0005737">
    <property type="term" value="C:cytoplasm"/>
    <property type="evidence" value="ECO:0007669"/>
    <property type="project" value="TreeGrafter"/>
</dbReference>
<dbReference type="GO" id="GO:0033743">
    <property type="term" value="F:peptide-methionine (R)-S-oxide reductase activity"/>
    <property type="evidence" value="ECO:0007669"/>
    <property type="project" value="UniProtKB-UniRule"/>
</dbReference>
<dbReference type="GO" id="GO:0008270">
    <property type="term" value="F:zinc ion binding"/>
    <property type="evidence" value="ECO:0007669"/>
    <property type="project" value="UniProtKB-UniRule"/>
</dbReference>
<dbReference type="GO" id="GO:0030091">
    <property type="term" value="P:protein repair"/>
    <property type="evidence" value="ECO:0007669"/>
    <property type="project" value="InterPro"/>
</dbReference>
<dbReference type="GO" id="GO:0006979">
    <property type="term" value="P:response to oxidative stress"/>
    <property type="evidence" value="ECO:0007669"/>
    <property type="project" value="InterPro"/>
</dbReference>
<dbReference type="FunFam" id="2.170.150.20:FF:000001">
    <property type="entry name" value="Peptide methionine sulfoxide reductase MsrB"/>
    <property type="match status" value="1"/>
</dbReference>
<dbReference type="Gene3D" id="2.170.150.20">
    <property type="entry name" value="Peptide methionine sulfoxide reductase"/>
    <property type="match status" value="1"/>
</dbReference>
<dbReference type="HAMAP" id="MF_01400">
    <property type="entry name" value="MsrB"/>
    <property type="match status" value="1"/>
</dbReference>
<dbReference type="InterPro" id="IPR028427">
    <property type="entry name" value="Met_Sox_Rdtase_MsrB"/>
</dbReference>
<dbReference type="InterPro" id="IPR002579">
    <property type="entry name" value="Met_Sox_Rdtase_MsrB_dom"/>
</dbReference>
<dbReference type="InterPro" id="IPR011057">
    <property type="entry name" value="Mss4-like_sf"/>
</dbReference>
<dbReference type="NCBIfam" id="TIGR00357">
    <property type="entry name" value="peptide-methionine (R)-S-oxide reductase MsrB"/>
    <property type="match status" value="1"/>
</dbReference>
<dbReference type="PANTHER" id="PTHR10173">
    <property type="entry name" value="METHIONINE SULFOXIDE REDUCTASE"/>
    <property type="match status" value="1"/>
</dbReference>
<dbReference type="PANTHER" id="PTHR10173:SF52">
    <property type="entry name" value="METHIONINE-R-SULFOXIDE REDUCTASE B1"/>
    <property type="match status" value="1"/>
</dbReference>
<dbReference type="Pfam" id="PF01641">
    <property type="entry name" value="SelR"/>
    <property type="match status" value="1"/>
</dbReference>
<dbReference type="SUPFAM" id="SSF51316">
    <property type="entry name" value="Mss4-like"/>
    <property type="match status" value="1"/>
</dbReference>
<dbReference type="PROSITE" id="PS51790">
    <property type="entry name" value="MSRB"/>
    <property type="match status" value="1"/>
</dbReference>
<keyword id="KW-0479">Metal-binding</keyword>
<keyword id="KW-0560">Oxidoreductase</keyword>
<keyword id="KW-1185">Reference proteome</keyword>
<keyword id="KW-0862">Zinc</keyword>
<name>MSRB_PECAS</name>
<comment type="catalytic activity">
    <reaction evidence="1">
        <text>L-methionyl-[protein] + [thioredoxin]-disulfide + H2O = L-methionyl-(R)-S-oxide-[protein] + [thioredoxin]-dithiol</text>
        <dbReference type="Rhea" id="RHEA:24164"/>
        <dbReference type="Rhea" id="RHEA-COMP:10698"/>
        <dbReference type="Rhea" id="RHEA-COMP:10700"/>
        <dbReference type="Rhea" id="RHEA-COMP:12313"/>
        <dbReference type="Rhea" id="RHEA-COMP:12314"/>
        <dbReference type="ChEBI" id="CHEBI:15377"/>
        <dbReference type="ChEBI" id="CHEBI:16044"/>
        <dbReference type="ChEBI" id="CHEBI:29950"/>
        <dbReference type="ChEBI" id="CHEBI:45764"/>
        <dbReference type="ChEBI" id="CHEBI:50058"/>
        <dbReference type="EC" id="1.8.4.12"/>
    </reaction>
</comment>
<comment type="cofactor">
    <cofactor evidence="1">
        <name>Zn(2+)</name>
        <dbReference type="ChEBI" id="CHEBI:29105"/>
    </cofactor>
    <text evidence="1">Binds 1 zinc ion per subunit. The zinc ion is important for the structural integrity of the protein.</text>
</comment>
<comment type="similarity">
    <text evidence="1">Belongs to the MsrB Met sulfoxide reductase family.</text>
</comment>
<accession>Q6D4P7</accession>
<evidence type="ECO:0000255" key="1">
    <source>
        <dbReference type="HAMAP-Rule" id="MF_01400"/>
    </source>
</evidence>
<evidence type="ECO:0000255" key="2">
    <source>
        <dbReference type="PROSITE-ProRule" id="PRU01126"/>
    </source>
</evidence>
<sequence length="139" mass="15549">MTNDSASHTPSDNTEMTEMQRYVTQQRGTEPAFSGKLLHNKRTGAYHCLCCQAPLFYSDSKYDSGCGWPSFDQPVSSEAVRYLEDESHNMRRIEIRCGQCDAHLGHVFPDGPKTTGERYCVNSASLSFIDDVDGERVDG</sequence>